<name>PUR9_CALBD</name>
<evidence type="ECO:0000255" key="1">
    <source>
        <dbReference type="HAMAP-Rule" id="MF_00139"/>
    </source>
</evidence>
<evidence type="ECO:0000255" key="2">
    <source>
        <dbReference type="PROSITE-ProRule" id="PRU01202"/>
    </source>
</evidence>
<organism>
    <name type="scientific">Caldicellulosiruptor bescii (strain ATCC BAA-1888 / DSM 6725 / KCTC 15123 / Z-1320)</name>
    <name type="common">Anaerocellum thermophilum</name>
    <dbReference type="NCBI Taxonomy" id="521460"/>
    <lineage>
        <taxon>Bacteria</taxon>
        <taxon>Bacillati</taxon>
        <taxon>Bacillota</taxon>
        <taxon>Bacillota incertae sedis</taxon>
        <taxon>Caldicellulosiruptorales</taxon>
        <taxon>Caldicellulosiruptoraceae</taxon>
        <taxon>Caldicellulosiruptor</taxon>
    </lineage>
</organism>
<gene>
    <name evidence="1" type="primary">purH</name>
    <name type="ordered locus">Athe_1445</name>
</gene>
<feature type="chain" id="PRO_1000122943" description="Bifunctional purine biosynthesis protein PurH">
    <location>
        <begin position="1"/>
        <end position="513"/>
    </location>
</feature>
<feature type="domain" description="MGS-like" evidence="2">
    <location>
        <begin position="1"/>
        <end position="145"/>
    </location>
</feature>
<keyword id="KW-0378">Hydrolase</keyword>
<keyword id="KW-0511">Multifunctional enzyme</keyword>
<keyword id="KW-0658">Purine biosynthesis</keyword>
<keyword id="KW-0808">Transferase</keyword>
<accession>B9MS89</accession>
<reference key="1">
    <citation type="submission" date="2009-01" db="EMBL/GenBank/DDBJ databases">
        <title>Complete sequence of chromosome of Caldicellulosiruptor becscii DSM 6725.</title>
        <authorList>
            <person name="Lucas S."/>
            <person name="Copeland A."/>
            <person name="Lapidus A."/>
            <person name="Glavina del Rio T."/>
            <person name="Tice H."/>
            <person name="Bruce D."/>
            <person name="Goodwin L."/>
            <person name="Pitluck S."/>
            <person name="Sims D."/>
            <person name="Meincke L."/>
            <person name="Brettin T."/>
            <person name="Detter J.C."/>
            <person name="Han C."/>
            <person name="Larimer F."/>
            <person name="Land M."/>
            <person name="Hauser L."/>
            <person name="Kyrpides N."/>
            <person name="Ovchinnikova G."/>
            <person name="Kataeva I."/>
            <person name="Adams M.W.W."/>
        </authorList>
    </citation>
    <scope>NUCLEOTIDE SEQUENCE [LARGE SCALE GENOMIC DNA]</scope>
    <source>
        <strain>ATCC BAA-1888 / DSM 6725 / KCTC 15123 / Z-1320</strain>
    </source>
</reference>
<dbReference type="EC" id="2.1.2.3" evidence="1"/>
<dbReference type="EC" id="3.5.4.10" evidence="1"/>
<dbReference type="EMBL" id="CP001393">
    <property type="protein sequence ID" value="ACM60543.1"/>
    <property type="molecule type" value="Genomic_DNA"/>
</dbReference>
<dbReference type="RefSeq" id="WP_015907905.1">
    <property type="nucleotide sequence ID" value="NC_012034.1"/>
</dbReference>
<dbReference type="SMR" id="B9MS89"/>
<dbReference type="STRING" id="521460.Athe_1445"/>
<dbReference type="GeneID" id="31772790"/>
<dbReference type="KEGG" id="ate:Athe_1445"/>
<dbReference type="eggNOG" id="COG0138">
    <property type="taxonomic scope" value="Bacteria"/>
</dbReference>
<dbReference type="HOGENOM" id="CLU_016316_5_2_9"/>
<dbReference type="UniPathway" id="UPA00074">
    <property type="reaction ID" value="UER00133"/>
</dbReference>
<dbReference type="UniPathway" id="UPA00074">
    <property type="reaction ID" value="UER00135"/>
</dbReference>
<dbReference type="Proteomes" id="UP000007723">
    <property type="component" value="Chromosome"/>
</dbReference>
<dbReference type="GO" id="GO:0005829">
    <property type="term" value="C:cytosol"/>
    <property type="evidence" value="ECO:0007669"/>
    <property type="project" value="TreeGrafter"/>
</dbReference>
<dbReference type="GO" id="GO:0003937">
    <property type="term" value="F:IMP cyclohydrolase activity"/>
    <property type="evidence" value="ECO:0007669"/>
    <property type="project" value="UniProtKB-UniRule"/>
</dbReference>
<dbReference type="GO" id="GO:0004643">
    <property type="term" value="F:phosphoribosylaminoimidazolecarboxamide formyltransferase activity"/>
    <property type="evidence" value="ECO:0007669"/>
    <property type="project" value="UniProtKB-UniRule"/>
</dbReference>
<dbReference type="GO" id="GO:0006189">
    <property type="term" value="P:'de novo' IMP biosynthetic process"/>
    <property type="evidence" value="ECO:0007669"/>
    <property type="project" value="UniProtKB-UniRule"/>
</dbReference>
<dbReference type="CDD" id="cd01421">
    <property type="entry name" value="IMPCH"/>
    <property type="match status" value="1"/>
</dbReference>
<dbReference type="FunFam" id="3.40.140.20:FF:000001">
    <property type="entry name" value="Bifunctional purine biosynthesis protein PurH"/>
    <property type="match status" value="1"/>
</dbReference>
<dbReference type="FunFam" id="3.40.140.20:FF:000002">
    <property type="entry name" value="Bifunctional purine biosynthesis protein PurH"/>
    <property type="match status" value="1"/>
</dbReference>
<dbReference type="FunFam" id="3.40.50.1380:FF:000001">
    <property type="entry name" value="Bifunctional purine biosynthesis protein PurH"/>
    <property type="match status" value="1"/>
</dbReference>
<dbReference type="Gene3D" id="3.40.140.20">
    <property type="match status" value="2"/>
</dbReference>
<dbReference type="Gene3D" id="3.40.50.1380">
    <property type="entry name" value="Methylglyoxal synthase-like domain"/>
    <property type="match status" value="1"/>
</dbReference>
<dbReference type="HAMAP" id="MF_00139">
    <property type="entry name" value="PurH"/>
    <property type="match status" value="1"/>
</dbReference>
<dbReference type="InterPro" id="IPR024051">
    <property type="entry name" value="AICAR_Tfase_dup_dom_sf"/>
</dbReference>
<dbReference type="InterPro" id="IPR016193">
    <property type="entry name" value="Cytidine_deaminase-like"/>
</dbReference>
<dbReference type="InterPro" id="IPR011607">
    <property type="entry name" value="MGS-like_dom"/>
</dbReference>
<dbReference type="InterPro" id="IPR036914">
    <property type="entry name" value="MGS-like_dom_sf"/>
</dbReference>
<dbReference type="InterPro" id="IPR002695">
    <property type="entry name" value="PurH-like"/>
</dbReference>
<dbReference type="NCBIfam" id="NF002049">
    <property type="entry name" value="PRK00881.1"/>
    <property type="match status" value="1"/>
</dbReference>
<dbReference type="NCBIfam" id="TIGR00355">
    <property type="entry name" value="purH"/>
    <property type="match status" value="1"/>
</dbReference>
<dbReference type="PANTHER" id="PTHR11692:SF0">
    <property type="entry name" value="BIFUNCTIONAL PURINE BIOSYNTHESIS PROTEIN ATIC"/>
    <property type="match status" value="1"/>
</dbReference>
<dbReference type="PANTHER" id="PTHR11692">
    <property type="entry name" value="BIFUNCTIONAL PURINE BIOSYNTHESIS PROTEIN PURH"/>
    <property type="match status" value="1"/>
</dbReference>
<dbReference type="Pfam" id="PF01808">
    <property type="entry name" value="AICARFT_IMPCHas"/>
    <property type="match status" value="1"/>
</dbReference>
<dbReference type="Pfam" id="PF02142">
    <property type="entry name" value="MGS"/>
    <property type="match status" value="1"/>
</dbReference>
<dbReference type="PIRSF" id="PIRSF000414">
    <property type="entry name" value="AICARFT_IMPCHas"/>
    <property type="match status" value="1"/>
</dbReference>
<dbReference type="SMART" id="SM00798">
    <property type="entry name" value="AICARFT_IMPCHas"/>
    <property type="match status" value="1"/>
</dbReference>
<dbReference type="SMART" id="SM00851">
    <property type="entry name" value="MGS"/>
    <property type="match status" value="1"/>
</dbReference>
<dbReference type="SUPFAM" id="SSF53927">
    <property type="entry name" value="Cytidine deaminase-like"/>
    <property type="match status" value="1"/>
</dbReference>
<dbReference type="SUPFAM" id="SSF52335">
    <property type="entry name" value="Methylglyoxal synthase-like"/>
    <property type="match status" value="1"/>
</dbReference>
<dbReference type="PROSITE" id="PS51855">
    <property type="entry name" value="MGS"/>
    <property type="match status" value="1"/>
</dbReference>
<protein>
    <recommendedName>
        <fullName evidence="1">Bifunctional purine biosynthesis protein PurH</fullName>
    </recommendedName>
    <domain>
        <recommendedName>
            <fullName evidence="1">Phosphoribosylaminoimidazolecarboxamide formyltransferase</fullName>
            <ecNumber evidence="1">2.1.2.3</ecNumber>
        </recommendedName>
        <alternativeName>
            <fullName evidence="1">AICAR transformylase</fullName>
        </alternativeName>
    </domain>
    <domain>
        <recommendedName>
            <fullName evidence="1">IMP cyclohydrolase</fullName>
            <ecNumber evidence="1">3.5.4.10</ecNumber>
        </recommendedName>
        <alternativeName>
            <fullName evidence="1">ATIC</fullName>
        </alternativeName>
        <alternativeName>
            <fullName evidence="1">IMP synthase</fullName>
        </alternativeName>
        <alternativeName>
            <fullName evidence="1">Inosinicase</fullName>
        </alternativeName>
    </domain>
</protein>
<comment type="catalytic activity">
    <reaction evidence="1">
        <text>(6R)-10-formyltetrahydrofolate + 5-amino-1-(5-phospho-beta-D-ribosyl)imidazole-4-carboxamide = 5-formamido-1-(5-phospho-D-ribosyl)imidazole-4-carboxamide + (6S)-5,6,7,8-tetrahydrofolate</text>
        <dbReference type="Rhea" id="RHEA:22192"/>
        <dbReference type="ChEBI" id="CHEBI:57453"/>
        <dbReference type="ChEBI" id="CHEBI:58467"/>
        <dbReference type="ChEBI" id="CHEBI:58475"/>
        <dbReference type="ChEBI" id="CHEBI:195366"/>
        <dbReference type="EC" id="2.1.2.3"/>
    </reaction>
</comment>
<comment type="catalytic activity">
    <reaction evidence="1">
        <text>IMP + H2O = 5-formamido-1-(5-phospho-D-ribosyl)imidazole-4-carboxamide</text>
        <dbReference type="Rhea" id="RHEA:18445"/>
        <dbReference type="ChEBI" id="CHEBI:15377"/>
        <dbReference type="ChEBI" id="CHEBI:58053"/>
        <dbReference type="ChEBI" id="CHEBI:58467"/>
        <dbReference type="EC" id="3.5.4.10"/>
    </reaction>
</comment>
<comment type="pathway">
    <text evidence="1">Purine metabolism; IMP biosynthesis via de novo pathway; 5-formamido-1-(5-phospho-D-ribosyl)imidazole-4-carboxamide from 5-amino-1-(5-phospho-D-ribosyl)imidazole-4-carboxamide (10-formyl THF route): step 1/1.</text>
</comment>
<comment type="pathway">
    <text evidence="1">Purine metabolism; IMP biosynthesis via de novo pathway; IMP from 5-formamido-1-(5-phospho-D-ribosyl)imidazole-4-carboxamide: step 1/1.</text>
</comment>
<comment type="domain">
    <text evidence="1">The IMP cyclohydrolase activity resides in the N-terminal region.</text>
</comment>
<comment type="similarity">
    <text evidence="1">Belongs to the PurH family.</text>
</comment>
<proteinExistence type="inferred from homology"/>
<sequence length="513" mass="58040">MNKRAIISVYDKNGIVEFAKKLKEFGYDIISTGGTMKYLTENGIEVINISDVTRFPEILDGRVKTLHPNIHAGILAMKDNREHLETLKALDILPIDMVVVNLYPFKETIFKEDVTLDNVIENIDIGGPTMIRAAAKNFKYTTVIVDPEDYDIVAMEIEKNGEVSYETRFYLATKVFEYTSYYDSMIFNYFKHVRKDQSFSKHFTVPLELLQYLRYGENPHQKACFYKISLPFIETSNIVNCTQLHGKELSYNNILDSDSAIELLKEFDEPTCVAIKHNNPCAVASAENINEAYKKVYESDPISIFGGIVAFNRKVDKNVAEQLKKIFLEIVIAPEFDEDALSILCSKKDLRVLKLASLEKTDTFYDIKSVNGGALVQEKDRMLLADQLQVVTERKPSEKELEDLIFAWKVVKHVKSNAIVVAKDKMTLGIGTGQTNRIWAVEHAISRSRFDLKGAVLASDAFFPFSDSVEAAGKAGISAIIQPGGSIRDKDSIEMANRFNIAMVFTGMRHFRH</sequence>